<sequence>MNKNLHPLMLAGTGSDVGKSIIAAAFCRIFLQDGYHPAPFKAQNMALNSYATPEGLEIGRAQAVQAEAAGVPCHTDMNPLLLKPSSDHTSQVVLNGRPIGNRNAYEYFRREGREELRKEVHAAFDRLAARYNPVVMEGAGSISEINLRDSDLVNLPMAMHAGADVILVADIDRGGVFASVYGSVMLLRPEERKHIKGILINKFRGDIRLFESGVKMLEDLCGVPVVGVVPYYKDIYIEEEDSVMLQTKNIRAGQGKVNVAVVLLRHLSNFTDFNVLERDPRVHLFYTNNTDELMKADIILLPGSKSTLSDLYELRRNGVAQAIVRAHREGATVMGICGGYQLMGREVCDPDHVEGEIERLPGLGLLPVSTRMQGEKVTRQVRFRFLEDSAVCEGYEIHMGTTTPLADVPVSPLNHLADGREDGYFVDRTCMGTYVHGILDNPSVIDYLLEPFADKLKETAFDYKAFKEEQYDKLAAHVRKHVDLPLIYQILTDND</sequence>
<protein>
    <recommendedName>
        <fullName evidence="1">Cobyric acid synthase</fullName>
    </recommendedName>
</protein>
<accession>Q64TD9</accession>
<comment type="function">
    <text evidence="1">Catalyzes amidations at positions B, D, E, and G on adenosylcobyrinic A,C-diamide. NH(2) groups are provided by glutamine, and one molecule of ATP is hydrogenolyzed for each amidation.</text>
</comment>
<comment type="pathway">
    <text evidence="1">Cofactor biosynthesis; adenosylcobalamin biosynthesis.</text>
</comment>
<comment type="similarity">
    <text evidence="1">Belongs to the CobB/CobQ family. CobQ subfamily.</text>
</comment>
<organism>
    <name type="scientific">Bacteroides fragilis (strain YCH46)</name>
    <dbReference type="NCBI Taxonomy" id="295405"/>
    <lineage>
        <taxon>Bacteria</taxon>
        <taxon>Pseudomonadati</taxon>
        <taxon>Bacteroidota</taxon>
        <taxon>Bacteroidia</taxon>
        <taxon>Bacteroidales</taxon>
        <taxon>Bacteroidaceae</taxon>
        <taxon>Bacteroides</taxon>
    </lineage>
</organism>
<feature type="chain" id="PRO_0000141287" description="Cobyric acid synthase">
    <location>
        <begin position="1"/>
        <end position="495"/>
    </location>
</feature>
<feature type="domain" description="GATase cobBQ-type" evidence="1">
    <location>
        <begin position="256"/>
        <end position="444"/>
    </location>
</feature>
<feature type="active site" description="Nucleophile" evidence="1">
    <location>
        <position position="337"/>
    </location>
</feature>
<feature type="active site" evidence="1">
    <location>
        <position position="436"/>
    </location>
</feature>
<dbReference type="EMBL" id="AP006841">
    <property type="protein sequence ID" value="BAD49240.1"/>
    <property type="molecule type" value="Genomic_DNA"/>
</dbReference>
<dbReference type="RefSeq" id="WP_005787973.1">
    <property type="nucleotide sequence ID" value="NZ_UYXF01000003.1"/>
</dbReference>
<dbReference type="RefSeq" id="YP_099774.1">
    <property type="nucleotide sequence ID" value="NC_006347.1"/>
</dbReference>
<dbReference type="SMR" id="Q64TD9"/>
<dbReference type="STRING" id="295405.BF2491"/>
<dbReference type="KEGG" id="bfr:BF2491"/>
<dbReference type="PATRIC" id="fig|295405.11.peg.2399"/>
<dbReference type="HOGENOM" id="CLU_019250_2_2_10"/>
<dbReference type="OrthoDB" id="9808302at2"/>
<dbReference type="UniPathway" id="UPA00148"/>
<dbReference type="Proteomes" id="UP000002197">
    <property type="component" value="Chromosome"/>
</dbReference>
<dbReference type="GO" id="GO:0015420">
    <property type="term" value="F:ABC-type vitamin B12 transporter activity"/>
    <property type="evidence" value="ECO:0007669"/>
    <property type="project" value="UniProtKB-UniRule"/>
</dbReference>
<dbReference type="GO" id="GO:0003824">
    <property type="term" value="F:catalytic activity"/>
    <property type="evidence" value="ECO:0007669"/>
    <property type="project" value="InterPro"/>
</dbReference>
<dbReference type="GO" id="GO:0009236">
    <property type="term" value="P:cobalamin biosynthetic process"/>
    <property type="evidence" value="ECO:0007669"/>
    <property type="project" value="UniProtKB-UniRule"/>
</dbReference>
<dbReference type="CDD" id="cd05389">
    <property type="entry name" value="CobQ_N"/>
    <property type="match status" value="1"/>
</dbReference>
<dbReference type="CDD" id="cd01750">
    <property type="entry name" value="GATase1_CobQ"/>
    <property type="match status" value="1"/>
</dbReference>
<dbReference type="Gene3D" id="3.40.50.880">
    <property type="match status" value="1"/>
</dbReference>
<dbReference type="Gene3D" id="3.40.50.300">
    <property type="entry name" value="P-loop containing nucleotide triphosphate hydrolases"/>
    <property type="match status" value="1"/>
</dbReference>
<dbReference type="HAMAP" id="MF_00028">
    <property type="entry name" value="CobQ"/>
    <property type="match status" value="1"/>
</dbReference>
<dbReference type="InterPro" id="IPR029062">
    <property type="entry name" value="Class_I_gatase-like"/>
</dbReference>
<dbReference type="InterPro" id="IPR002586">
    <property type="entry name" value="CobQ/CobB/MinD/ParA_Nub-bd_dom"/>
</dbReference>
<dbReference type="InterPro" id="IPR033949">
    <property type="entry name" value="CobQ_GATase1"/>
</dbReference>
<dbReference type="InterPro" id="IPR047045">
    <property type="entry name" value="CobQ_N"/>
</dbReference>
<dbReference type="InterPro" id="IPR004459">
    <property type="entry name" value="CobQ_synth"/>
</dbReference>
<dbReference type="InterPro" id="IPR011698">
    <property type="entry name" value="GATase_3"/>
</dbReference>
<dbReference type="InterPro" id="IPR027417">
    <property type="entry name" value="P-loop_NTPase"/>
</dbReference>
<dbReference type="NCBIfam" id="TIGR00313">
    <property type="entry name" value="cobQ"/>
    <property type="match status" value="1"/>
</dbReference>
<dbReference type="NCBIfam" id="NF001989">
    <property type="entry name" value="PRK00784.1"/>
    <property type="match status" value="1"/>
</dbReference>
<dbReference type="PANTHER" id="PTHR21343:SF1">
    <property type="entry name" value="COBYRIC ACID SYNTHASE"/>
    <property type="match status" value="1"/>
</dbReference>
<dbReference type="PANTHER" id="PTHR21343">
    <property type="entry name" value="DETHIOBIOTIN SYNTHETASE"/>
    <property type="match status" value="1"/>
</dbReference>
<dbReference type="Pfam" id="PF01656">
    <property type="entry name" value="CbiA"/>
    <property type="match status" value="1"/>
</dbReference>
<dbReference type="Pfam" id="PF07685">
    <property type="entry name" value="GATase_3"/>
    <property type="match status" value="1"/>
</dbReference>
<dbReference type="SUPFAM" id="SSF52317">
    <property type="entry name" value="Class I glutamine amidotransferase-like"/>
    <property type="match status" value="1"/>
</dbReference>
<dbReference type="SUPFAM" id="SSF52540">
    <property type="entry name" value="P-loop containing nucleoside triphosphate hydrolases"/>
    <property type="match status" value="1"/>
</dbReference>
<dbReference type="PROSITE" id="PS51274">
    <property type="entry name" value="GATASE_COBBQ"/>
    <property type="match status" value="1"/>
</dbReference>
<keyword id="KW-0169">Cobalamin biosynthesis</keyword>
<keyword id="KW-0315">Glutamine amidotransferase</keyword>
<evidence type="ECO:0000255" key="1">
    <source>
        <dbReference type="HAMAP-Rule" id="MF_00028"/>
    </source>
</evidence>
<proteinExistence type="inferred from homology"/>
<reference key="1">
    <citation type="journal article" date="2004" name="Proc. Natl. Acad. Sci. U.S.A.">
        <title>Genomic analysis of Bacteroides fragilis reveals extensive DNA inversions regulating cell surface adaptation.</title>
        <authorList>
            <person name="Kuwahara T."/>
            <person name="Yamashita A."/>
            <person name="Hirakawa H."/>
            <person name="Nakayama H."/>
            <person name="Toh H."/>
            <person name="Okada N."/>
            <person name="Kuhara S."/>
            <person name="Hattori M."/>
            <person name="Hayashi T."/>
            <person name="Ohnishi Y."/>
        </authorList>
    </citation>
    <scope>NUCLEOTIDE SEQUENCE [LARGE SCALE GENOMIC DNA]</scope>
    <source>
        <strain>YCH46</strain>
    </source>
</reference>
<gene>
    <name evidence="1" type="primary">cobQ</name>
    <name type="ordered locus">BF2491</name>
</gene>
<name>COBQ_BACFR</name>